<keyword id="KW-0963">Cytoplasm</keyword>
<keyword id="KW-0285">Flavoprotein</keyword>
<keyword id="KW-0288">FMN</keyword>
<keyword id="KW-0479">Metal-binding</keyword>
<keyword id="KW-0507">mRNA processing</keyword>
<keyword id="KW-0520">NAD</keyword>
<keyword id="KW-0521">NADP</keyword>
<keyword id="KW-0539">Nucleus</keyword>
<keyword id="KW-0560">Oxidoreductase</keyword>
<keyword id="KW-1185">Reference proteome</keyword>
<keyword id="KW-0677">Repeat</keyword>
<keyword id="KW-0819">tRNA processing</keyword>
<keyword id="KW-0862">Zinc</keyword>
<keyword id="KW-0863">Zinc-finger</keyword>
<accession>A7EKL8</accession>
<proteinExistence type="inferred from homology"/>
<feature type="chain" id="PRO_0000330248" description="tRNA-dihydrouridine(47) synthase [NAD(P)(+)]">
    <location>
        <begin position="1"/>
        <end position="750"/>
    </location>
</feature>
<feature type="zinc finger region" description="C3H1-type 1">
    <location>
        <begin position="155"/>
        <end position="179"/>
    </location>
</feature>
<feature type="zinc finger region" description="C3H1-type 2">
    <location>
        <begin position="200"/>
        <end position="221"/>
    </location>
</feature>
<feature type="region of interest" description="Disordered" evidence="4">
    <location>
        <begin position="1"/>
        <end position="145"/>
    </location>
</feature>
<feature type="region of interest" description="Disordered" evidence="4">
    <location>
        <begin position="292"/>
        <end position="318"/>
    </location>
</feature>
<feature type="compositionally biased region" description="Basic and acidic residues" evidence="4">
    <location>
        <begin position="13"/>
        <end position="28"/>
    </location>
</feature>
<feature type="compositionally biased region" description="Basic and acidic residues" evidence="4">
    <location>
        <begin position="61"/>
        <end position="72"/>
    </location>
</feature>
<feature type="compositionally biased region" description="Basic and acidic residues" evidence="4">
    <location>
        <begin position="118"/>
        <end position="130"/>
    </location>
</feature>
<feature type="active site" description="Proton donor" evidence="2">
    <location>
        <position position="451"/>
    </location>
</feature>
<feature type="binding site" evidence="2">
    <location>
        <begin position="343"/>
        <end position="345"/>
    </location>
    <ligand>
        <name>FMN</name>
        <dbReference type="ChEBI" id="CHEBI:58210"/>
    </ligand>
</feature>
<feature type="binding site" evidence="2">
    <location>
        <position position="419"/>
    </location>
    <ligand>
        <name>FMN</name>
        <dbReference type="ChEBI" id="CHEBI:58210"/>
    </ligand>
</feature>
<feature type="binding site" evidence="2">
    <location>
        <position position="491"/>
    </location>
    <ligand>
        <name>FMN</name>
        <dbReference type="ChEBI" id="CHEBI:58210"/>
    </ligand>
</feature>
<feature type="binding site" evidence="2">
    <location>
        <position position="532"/>
    </location>
    <ligand>
        <name>FMN</name>
        <dbReference type="ChEBI" id="CHEBI:58210"/>
    </ligand>
</feature>
<feature type="binding site" evidence="2">
    <location>
        <begin position="591"/>
        <end position="593"/>
    </location>
    <ligand>
        <name>FMN</name>
        <dbReference type="ChEBI" id="CHEBI:58210"/>
    </ligand>
</feature>
<feature type="binding site" evidence="2">
    <location>
        <begin position="615"/>
        <end position="616"/>
    </location>
    <ligand>
        <name>FMN</name>
        <dbReference type="ChEBI" id="CHEBI:58210"/>
    </ligand>
</feature>
<protein>
    <recommendedName>
        <fullName>tRNA-dihydrouridine(47) synthase [NAD(P)(+)]</fullName>
        <ecNumber evidence="1">1.3.1.89</ecNumber>
    </recommendedName>
    <alternativeName>
        <fullName>mRNA-dihydrouridine synthase dus3</fullName>
        <ecNumber evidence="3">1.3.1.-</ecNumber>
    </alternativeName>
    <alternativeName>
        <fullName>tRNA-dihydrouridine synthase 3</fullName>
    </alternativeName>
</protein>
<reference key="1">
    <citation type="journal article" date="2011" name="PLoS Genet.">
        <title>Genomic analysis of the necrotrophic fungal pathogens Sclerotinia sclerotiorum and Botrytis cinerea.</title>
        <authorList>
            <person name="Amselem J."/>
            <person name="Cuomo C.A."/>
            <person name="van Kan J.A.L."/>
            <person name="Viaud M."/>
            <person name="Benito E.P."/>
            <person name="Couloux A."/>
            <person name="Coutinho P.M."/>
            <person name="de Vries R.P."/>
            <person name="Dyer P.S."/>
            <person name="Fillinger S."/>
            <person name="Fournier E."/>
            <person name="Gout L."/>
            <person name="Hahn M."/>
            <person name="Kohn L."/>
            <person name="Lapalu N."/>
            <person name="Plummer K.M."/>
            <person name="Pradier J.-M."/>
            <person name="Quevillon E."/>
            <person name="Sharon A."/>
            <person name="Simon A."/>
            <person name="ten Have A."/>
            <person name="Tudzynski B."/>
            <person name="Tudzynski P."/>
            <person name="Wincker P."/>
            <person name="Andrew M."/>
            <person name="Anthouard V."/>
            <person name="Beever R.E."/>
            <person name="Beffa R."/>
            <person name="Benoit I."/>
            <person name="Bouzid O."/>
            <person name="Brault B."/>
            <person name="Chen Z."/>
            <person name="Choquer M."/>
            <person name="Collemare J."/>
            <person name="Cotton P."/>
            <person name="Danchin E.G."/>
            <person name="Da Silva C."/>
            <person name="Gautier A."/>
            <person name="Giraud C."/>
            <person name="Giraud T."/>
            <person name="Gonzalez C."/>
            <person name="Grossetete S."/>
            <person name="Gueldener U."/>
            <person name="Henrissat B."/>
            <person name="Howlett B.J."/>
            <person name="Kodira C."/>
            <person name="Kretschmer M."/>
            <person name="Lappartient A."/>
            <person name="Leroch M."/>
            <person name="Levis C."/>
            <person name="Mauceli E."/>
            <person name="Neuveglise C."/>
            <person name="Oeser B."/>
            <person name="Pearson M."/>
            <person name="Poulain J."/>
            <person name="Poussereau N."/>
            <person name="Quesneville H."/>
            <person name="Rascle C."/>
            <person name="Schumacher J."/>
            <person name="Segurens B."/>
            <person name="Sexton A."/>
            <person name="Silva E."/>
            <person name="Sirven C."/>
            <person name="Soanes D.M."/>
            <person name="Talbot N.J."/>
            <person name="Templeton M."/>
            <person name="Yandava C."/>
            <person name="Yarden O."/>
            <person name="Zeng Q."/>
            <person name="Rollins J.A."/>
            <person name="Lebrun M.-H."/>
            <person name="Dickman M."/>
        </authorList>
    </citation>
    <scope>NUCLEOTIDE SEQUENCE [LARGE SCALE GENOMIC DNA]</scope>
    <source>
        <strain>ATCC 18683 / 1980 / Ss-1</strain>
    </source>
</reference>
<organism>
    <name type="scientific">Sclerotinia sclerotiorum (strain ATCC 18683 / 1980 / Ss-1)</name>
    <name type="common">White mold</name>
    <name type="synonym">Whetzelinia sclerotiorum</name>
    <dbReference type="NCBI Taxonomy" id="665079"/>
    <lineage>
        <taxon>Eukaryota</taxon>
        <taxon>Fungi</taxon>
        <taxon>Dikarya</taxon>
        <taxon>Ascomycota</taxon>
        <taxon>Pezizomycotina</taxon>
        <taxon>Leotiomycetes</taxon>
        <taxon>Helotiales</taxon>
        <taxon>Sclerotiniaceae</taxon>
        <taxon>Sclerotinia</taxon>
    </lineage>
</organism>
<gene>
    <name type="primary">dus3</name>
    <name type="ORF">SS1G_05865</name>
</gene>
<dbReference type="EC" id="1.3.1.89" evidence="1"/>
<dbReference type="EC" id="1.3.1.-" evidence="3"/>
<dbReference type="EMBL" id="CH476627">
    <property type="protein sequence ID" value="EDO03384.1"/>
    <property type="molecule type" value="Genomic_DNA"/>
</dbReference>
<dbReference type="RefSeq" id="XP_001592943.1">
    <property type="nucleotide sequence ID" value="XM_001592893.1"/>
</dbReference>
<dbReference type="SMR" id="A7EKL8"/>
<dbReference type="FunCoup" id="A7EKL8">
    <property type="interactions" value="857"/>
</dbReference>
<dbReference type="STRING" id="665079.A7EKL8"/>
<dbReference type="EnsemblFungi" id="EDO03384">
    <property type="protein sequence ID" value="EDO03384"/>
    <property type="gene ID" value="SS1G_05865"/>
</dbReference>
<dbReference type="GeneID" id="5489415"/>
<dbReference type="KEGG" id="ssl:SS1G_05865"/>
<dbReference type="VEuPathDB" id="FungiDB:sscle_05g046610"/>
<dbReference type="eggNOG" id="KOG2333">
    <property type="taxonomic scope" value="Eukaryota"/>
</dbReference>
<dbReference type="HOGENOM" id="CLU_013299_7_0_1"/>
<dbReference type="InParanoid" id="A7EKL8"/>
<dbReference type="OMA" id="WSYIAEC"/>
<dbReference type="OrthoDB" id="259935at2759"/>
<dbReference type="Proteomes" id="UP000001312">
    <property type="component" value="Unassembled WGS sequence"/>
</dbReference>
<dbReference type="GO" id="GO:0005737">
    <property type="term" value="C:cytoplasm"/>
    <property type="evidence" value="ECO:0007669"/>
    <property type="project" value="UniProtKB-SubCell"/>
</dbReference>
<dbReference type="GO" id="GO:0034399">
    <property type="term" value="C:nuclear periphery"/>
    <property type="evidence" value="ECO:0007669"/>
    <property type="project" value="EnsemblFungi"/>
</dbReference>
<dbReference type="GO" id="GO:0050660">
    <property type="term" value="F:flavin adenine dinucleotide binding"/>
    <property type="evidence" value="ECO:0007669"/>
    <property type="project" value="InterPro"/>
</dbReference>
<dbReference type="GO" id="GO:0106414">
    <property type="term" value="F:mRNA dihydrouridine synthase activity"/>
    <property type="evidence" value="ECO:0007669"/>
    <property type="project" value="RHEA"/>
</dbReference>
<dbReference type="GO" id="GO:0017150">
    <property type="term" value="F:tRNA dihydrouridine synthase activity"/>
    <property type="evidence" value="ECO:0000318"/>
    <property type="project" value="GO_Central"/>
</dbReference>
<dbReference type="GO" id="GO:0102265">
    <property type="term" value="F:tRNA-dihydrouridine47 synthase activity"/>
    <property type="evidence" value="ECO:0007669"/>
    <property type="project" value="UniProtKB-EC"/>
</dbReference>
<dbReference type="GO" id="GO:0008270">
    <property type="term" value="F:zinc ion binding"/>
    <property type="evidence" value="ECO:0007669"/>
    <property type="project" value="UniProtKB-KW"/>
</dbReference>
<dbReference type="GO" id="GO:0006397">
    <property type="term" value="P:mRNA processing"/>
    <property type="evidence" value="ECO:0007669"/>
    <property type="project" value="UniProtKB-KW"/>
</dbReference>
<dbReference type="CDD" id="cd02801">
    <property type="entry name" value="DUS_like_FMN"/>
    <property type="match status" value="1"/>
</dbReference>
<dbReference type="FunFam" id="3.20.20.70:FF:000145">
    <property type="entry name" value="tRNA-dihydrouridine(47) synthase [NAD(P)(+)]"/>
    <property type="match status" value="1"/>
</dbReference>
<dbReference type="Gene3D" id="3.20.20.70">
    <property type="entry name" value="Aldolase class I"/>
    <property type="match status" value="1"/>
</dbReference>
<dbReference type="InterPro" id="IPR013785">
    <property type="entry name" value="Aldolase_TIM"/>
</dbReference>
<dbReference type="InterPro" id="IPR035587">
    <property type="entry name" value="DUS-like_FMN-bd"/>
</dbReference>
<dbReference type="InterPro" id="IPR018517">
    <property type="entry name" value="tRNA_hU_synthase_CS"/>
</dbReference>
<dbReference type="PANTHER" id="PTHR45846">
    <property type="entry name" value="TRNA-DIHYDROURIDINE(47) SYNTHASE [NAD(P)(+)]-LIKE"/>
    <property type="match status" value="1"/>
</dbReference>
<dbReference type="PANTHER" id="PTHR45846:SF1">
    <property type="entry name" value="TRNA-DIHYDROURIDINE(47) SYNTHASE [NAD(P)(+)]-LIKE"/>
    <property type="match status" value="1"/>
</dbReference>
<dbReference type="Pfam" id="PF01207">
    <property type="entry name" value="Dus"/>
    <property type="match status" value="2"/>
</dbReference>
<dbReference type="SUPFAM" id="SSF51395">
    <property type="entry name" value="FMN-linked oxidoreductases"/>
    <property type="match status" value="1"/>
</dbReference>
<dbReference type="PROSITE" id="PS01136">
    <property type="entry name" value="UPF0034"/>
    <property type="match status" value="1"/>
</dbReference>
<comment type="function">
    <text evidence="1 3">Catalyzes the synthesis of dihydrouridine, a modified base found in the D-loop of most tRNAs. Specifically modifies U47 in cytoplasmic tRNAs (By similarity). Catalyzes the synthesis of dihydrouridine in some mRNAs, thereby affecting their translation (By similarity).</text>
</comment>
<comment type="catalytic activity">
    <reaction evidence="1">
        <text>5,6-dihydrouridine(47) in tRNA + NAD(+) = uridine(47) in tRNA + NADH + H(+)</text>
        <dbReference type="Rhea" id="RHEA:53364"/>
        <dbReference type="Rhea" id="RHEA-COMP:13539"/>
        <dbReference type="Rhea" id="RHEA-COMP:13540"/>
        <dbReference type="ChEBI" id="CHEBI:15378"/>
        <dbReference type="ChEBI" id="CHEBI:57540"/>
        <dbReference type="ChEBI" id="CHEBI:57945"/>
        <dbReference type="ChEBI" id="CHEBI:65315"/>
        <dbReference type="ChEBI" id="CHEBI:74443"/>
        <dbReference type="EC" id="1.3.1.89"/>
    </reaction>
    <physiologicalReaction direction="right-to-left" evidence="1">
        <dbReference type="Rhea" id="RHEA:53366"/>
    </physiologicalReaction>
</comment>
<comment type="catalytic activity">
    <reaction evidence="1">
        <text>5,6-dihydrouridine(47) in tRNA + NADP(+) = uridine(47) in tRNA + NADPH + H(+)</text>
        <dbReference type="Rhea" id="RHEA:53360"/>
        <dbReference type="Rhea" id="RHEA-COMP:13539"/>
        <dbReference type="Rhea" id="RHEA-COMP:13540"/>
        <dbReference type="ChEBI" id="CHEBI:15378"/>
        <dbReference type="ChEBI" id="CHEBI:57783"/>
        <dbReference type="ChEBI" id="CHEBI:58349"/>
        <dbReference type="ChEBI" id="CHEBI:65315"/>
        <dbReference type="ChEBI" id="CHEBI:74443"/>
        <dbReference type="EC" id="1.3.1.89"/>
    </reaction>
    <physiologicalReaction direction="right-to-left" evidence="1">
        <dbReference type="Rhea" id="RHEA:53362"/>
    </physiologicalReaction>
</comment>
<comment type="catalytic activity">
    <reaction evidence="3">
        <text>a 5,6-dihydrouridine in mRNA + NAD(+) = a uridine in mRNA + NADH + H(+)</text>
        <dbReference type="Rhea" id="RHEA:69851"/>
        <dbReference type="Rhea" id="RHEA-COMP:14658"/>
        <dbReference type="Rhea" id="RHEA-COMP:17789"/>
        <dbReference type="ChEBI" id="CHEBI:15378"/>
        <dbReference type="ChEBI" id="CHEBI:57540"/>
        <dbReference type="ChEBI" id="CHEBI:57945"/>
        <dbReference type="ChEBI" id="CHEBI:65315"/>
        <dbReference type="ChEBI" id="CHEBI:74443"/>
    </reaction>
    <physiologicalReaction direction="right-to-left" evidence="3">
        <dbReference type="Rhea" id="RHEA:69853"/>
    </physiologicalReaction>
</comment>
<comment type="catalytic activity">
    <reaction evidence="3">
        <text>a 5,6-dihydrouridine in mRNA + NADP(+) = a uridine in mRNA + NADPH + H(+)</text>
        <dbReference type="Rhea" id="RHEA:69855"/>
        <dbReference type="Rhea" id="RHEA-COMP:14658"/>
        <dbReference type="Rhea" id="RHEA-COMP:17789"/>
        <dbReference type="ChEBI" id="CHEBI:15378"/>
        <dbReference type="ChEBI" id="CHEBI:57783"/>
        <dbReference type="ChEBI" id="CHEBI:58349"/>
        <dbReference type="ChEBI" id="CHEBI:65315"/>
        <dbReference type="ChEBI" id="CHEBI:74443"/>
    </reaction>
    <physiologicalReaction direction="right-to-left" evidence="3">
        <dbReference type="Rhea" id="RHEA:69857"/>
    </physiologicalReaction>
</comment>
<comment type="cofactor">
    <cofactor evidence="2">
        <name>FMN</name>
        <dbReference type="ChEBI" id="CHEBI:58210"/>
    </cofactor>
</comment>
<comment type="subcellular location">
    <subcellularLocation>
        <location evidence="1">Cytoplasm</location>
    </subcellularLocation>
    <subcellularLocation>
        <location evidence="1">Nucleus</location>
    </subcellularLocation>
</comment>
<comment type="similarity">
    <text evidence="5">Belongs to the Dus family. Dus3 subfamily.</text>
</comment>
<evidence type="ECO:0000250" key="1">
    <source>
        <dbReference type="UniProtKB" id="Q06053"/>
    </source>
</evidence>
<evidence type="ECO:0000250" key="2">
    <source>
        <dbReference type="UniProtKB" id="Q5SMC7"/>
    </source>
</evidence>
<evidence type="ECO:0000250" key="3">
    <source>
        <dbReference type="UniProtKB" id="Q9UTH9"/>
    </source>
</evidence>
<evidence type="ECO:0000256" key="4">
    <source>
        <dbReference type="SAM" id="MobiDB-lite"/>
    </source>
</evidence>
<evidence type="ECO:0000305" key="5"/>
<name>DUS3_SCLS1</name>
<sequence length="750" mass="84245">MTDEIPNPVQPEKSLKRPLDGEQLEEAHPPQPILPEDSAVTKAEKVERNGANGNSVSNEEPVAKRIKTEEQNHNSTATDSRDRVRGIAPIKAEYLLHPAGSRSATDGRNPAANDDAAEEKPRGDNRDNGGKKKKKEKGQNKDRQFGSWGDKIKLCNSTSNSPEFSPKECSFGESCKCEHDLRKYLAEGKRGDLTTFNSKCPVWEDNGTCLAGWKCRFVGSHSKEVKREDGRMELVLIEDLERMRTTVAGDEEALGGVVNVVSTKDKLDLARRRTKMEKSDLYTNWLDKNSEEVNRQSNLRKDQKNDQTQEEKEENRARYVEPPFLPSEKRRIYFGPETPVLAPLTTQGNLPFRRLCVELGAQLTYSEMAMSIPLFQGQKSEWALMKAHESEITPPRINPDRSSIVQNYNNSKDLKFGTQISANKPFQAIKAAEILSRFVPHLRVIDLNCGCPIELVYRQGAGSALLDAPSKLEKMIRGMNAVSGEVPITAKIRMGTMTGKPTALKTIERLAFGGVESRERLGAPGCAAITLHGRSRQQRYTKNADWSYIAECAALVKSYNQKKDDLTDTIMEPDARTLPNAPDGKLHFIGNGDCYSHVDYLDHIQNASVDSVMVARGALIKPWLFEEIEKGQTLDKSASERLQYIEKFARYGLEAWGSDEMGVGQTRRFLLEWLSFAHRYVPAGILEHLPPSLQDRPPAYRGRNDLETLLASDNYMDWMKICEMFLGPAHEGFKFQPKHKSNSYEIEAEG</sequence>